<comment type="function">
    <text evidence="1">Converts 2C-methyl-D-erythritol 2,4-cyclodiphosphate (ME-2,4cPP) into 1-hydroxy-2-methyl-2-(E)-butenyl 4-diphosphate.</text>
</comment>
<comment type="catalytic activity">
    <reaction evidence="1">
        <text>(2E)-4-hydroxy-3-methylbut-2-enyl diphosphate + oxidized [flavodoxin] + H2O + 2 H(+) = 2-C-methyl-D-erythritol 2,4-cyclic diphosphate + reduced [flavodoxin]</text>
        <dbReference type="Rhea" id="RHEA:43604"/>
        <dbReference type="Rhea" id="RHEA-COMP:10622"/>
        <dbReference type="Rhea" id="RHEA-COMP:10623"/>
        <dbReference type="ChEBI" id="CHEBI:15377"/>
        <dbReference type="ChEBI" id="CHEBI:15378"/>
        <dbReference type="ChEBI" id="CHEBI:57618"/>
        <dbReference type="ChEBI" id="CHEBI:58210"/>
        <dbReference type="ChEBI" id="CHEBI:58483"/>
        <dbReference type="ChEBI" id="CHEBI:128753"/>
        <dbReference type="EC" id="1.17.7.3"/>
    </reaction>
</comment>
<comment type="cofactor">
    <cofactor evidence="1">
        <name>[4Fe-4S] cluster</name>
        <dbReference type="ChEBI" id="CHEBI:49883"/>
    </cofactor>
    <text evidence="1">Binds 1 [4Fe-4S] cluster.</text>
</comment>
<comment type="pathway">
    <text evidence="1">Isoprenoid biosynthesis; isopentenyl diphosphate biosynthesis via DXP pathway; isopentenyl diphosphate from 1-deoxy-D-xylulose 5-phosphate: step 5/6.</text>
</comment>
<comment type="similarity">
    <text evidence="1">Belongs to the IspG family.</text>
</comment>
<dbReference type="EC" id="1.17.7.3" evidence="1"/>
<dbReference type="EMBL" id="AL590842">
    <property type="protein sequence ID" value="CAL21490.1"/>
    <property type="molecule type" value="Genomic_DNA"/>
</dbReference>
<dbReference type="EMBL" id="AE009952">
    <property type="protein sequence ID" value="AAM84926.1"/>
    <property type="molecule type" value="Genomic_DNA"/>
</dbReference>
<dbReference type="EMBL" id="AE017042">
    <property type="protein sequence ID" value="AAS62933.1"/>
    <property type="molecule type" value="Genomic_DNA"/>
</dbReference>
<dbReference type="PIR" id="AG0350">
    <property type="entry name" value="AG0350"/>
</dbReference>
<dbReference type="RefSeq" id="WP_002209817.1">
    <property type="nucleotide sequence ID" value="NZ_WUCM01000067.1"/>
</dbReference>
<dbReference type="RefSeq" id="YP_002347814.1">
    <property type="nucleotide sequence ID" value="NC_003143.1"/>
</dbReference>
<dbReference type="SMR" id="P58672"/>
<dbReference type="STRING" id="214092.YPO2879"/>
<dbReference type="PaxDb" id="214092-YPO2879"/>
<dbReference type="DNASU" id="1146300"/>
<dbReference type="EnsemblBacteria" id="AAS62933">
    <property type="protein sequence ID" value="AAS62933"/>
    <property type="gene ID" value="YP_2745"/>
</dbReference>
<dbReference type="GeneID" id="57975837"/>
<dbReference type="KEGG" id="ype:YPO2879"/>
<dbReference type="KEGG" id="ypk:y1353"/>
<dbReference type="KEGG" id="ypm:YP_2745"/>
<dbReference type="PATRIC" id="fig|214092.21.peg.3325"/>
<dbReference type="eggNOG" id="COG0821">
    <property type="taxonomic scope" value="Bacteria"/>
</dbReference>
<dbReference type="HOGENOM" id="CLU_042258_0_0_6"/>
<dbReference type="OMA" id="PTCGRTQ"/>
<dbReference type="OrthoDB" id="9803214at2"/>
<dbReference type="UniPathway" id="UPA00056">
    <property type="reaction ID" value="UER00096"/>
</dbReference>
<dbReference type="Proteomes" id="UP000000815">
    <property type="component" value="Chromosome"/>
</dbReference>
<dbReference type="Proteomes" id="UP000001019">
    <property type="component" value="Chromosome"/>
</dbReference>
<dbReference type="Proteomes" id="UP000002490">
    <property type="component" value="Chromosome"/>
</dbReference>
<dbReference type="GO" id="GO:0051539">
    <property type="term" value="F:4 iron, 4 sulfur cluster binding"/>
    <property type="evidence" value="ECO:0007669"/>
    <property type="project" value="UniProtKB-UniRule"/>
</dbReference>
<dbReference type="GO" id="GO:0046429">
    <property type="term" value="F:4-hydroxy-3-methylbut-2-en-1-yl diphosphate synthase activity (ferredoxin)"/>
    <property type="evidence" value="ECO:0000318"/>
    <property type="project" value="GO_Central"/>
</dbReference>
<dbReference type="GO" id="GO:0141197">
    <property type="term" value="F:4-hydroxy-3-methylbut-2-enyl-diphosphate synthase activity (flavodoxin)"/>
    <property type="evidence" value="ECO:0007669"/>
    <property type="project" value="UniProtKB-EC"/>
</dbReference>
<dbReference type="GO" id="GO:0005506">
    <property type="term" value="F:iron ion binding"/>
    <property type="evidence" value="ECO:0007669"/>
    <property type="project" value="InterPro"/>
</dbReference>
<dbReference type="GO" id="GO:0019288">
    <property type="term" value="P:isopentenyl diphosphate biosynthetic process, methylerythritol 4-phosphate pathway"/>
    <property type="evidence" value="ECO:0000318"/>
    <property type="project" value="GO_Central"/>
</dbReference>
<dbReference type="GO" id="GO:0016114">
    <property type="term" value="P:terpenoid biosynthetic process"/>
    <property type="evidence" value="ECO:0007669"/>
    <property type="project" value="InterPro"/>
</dbReference>
<dbReference type="FunFam" id="3.20.20.20:FF:000001">
    <property type="entry name" value="4-hydroxy-3-methylbut-2-en-1-yl diphosphate synthase (flavodoxin)"/>
    <property type="match status" value="1"/>
</dbReference>
<dbReference type="FunFam" id="3.30.413.10:FF:000002">
    <property type="entry name" value="4-hydroxy-3-methylbut-2-en-1-yl diphosphate synthase (flavodoxin)"/>
    <property type="match status" value="1"/>
</dbReference>
<dbReference type="Gene3D" id="3.20.20.20">
    <property type="entry name" value="Dihydropteroate synthase-like"/>
    <property type="match status" value="1"/>
</dbReference>
<dbReference type="Gene3D" id="3.30.413.10">
    <property type="entry name" value="Sulfite Reductase Hemoprotein, domain 1"/>
    <property type="match status" value="1"/>
</dbReference>
<dbReference type="HAMAP" id="MF_00159">
    <property type="entry name" value="IspG"/>
    <property type="match status" value="1"/>
</dbReference>
<dbReference type="InterPro" id="IPR011005">
    <property type="entry name" value="Dihydropteroate_synth-like_sf"/>
</dbReference>
<dbReference type="InterPro" id="IPR036849">
    <property type="entry name" value="Enolase-like_C_sf"/>
</dbReference>
<dbReference type="InterPro" id="IPR016425">
    <property type="entry name" value="IspG_bac"/>
</dbReference>
<dbReference type="InterPro" id="IPR004588">
    <property type="entry name" value="IspG_bac-typ"/>
</dbReference>
<dbReference type="InterPro" id="IPR045854">
    <property type="entry name" value="NO2/SO3_Rdtase_4Fe4S_sf"/>
</dbReference>
<dbReference type="NCBIfam" id="TIGR00612">
    <property type="entry name" value="ispG_gcpE"/>
    <property type="match status" value="1"/>
</dbReference>
<dbReference type="NCBIfam" id="NF001540">
    <property type="entry name" value="PRK00366.1"/>
    <property type="match status" value="1"/>
</dbReference>
<dbReference type="PANTHER" id="PTHR30454">
    <property type="entry name" value="4-HYDROXY-3-METHYLBUT-2-EN-1-YL DIPHOSPHATE SYNTHASE"/>
    <property type="match status" value="1"/>
</dbReference>
<dbReference type="PANTHER" id="PTHR30454:SF0">
    <property type="entry name" value="4-HYDROXY-3-METHYLBUT-2-EN-1-YL DIPHOSPHATE SYNTHASE (FERREDOXIN), CHLOROPLASTIC"/>
    <property type="match status" value="1"/>
</dbReference>
<dbReference type="Pfam" id="PF04551">
    <property type="entry name" value="GcpE"/>
    <property type="match status" value="1"/>
</dbReference>
<dbReference type="PIRSF" id="PIRSF004640">
    <property type="entry name" value="IspG"/>
    <property type="match status" value="1"/>
</dbReference>
<dbReference type="SUPFAM" id="SSF51604">
    <property type="entry name" value="Enolase C-terminal domain-like"/>
    <property type="match status" value="1"/>
</dbReference>
<dbReference type="SUPFAM" id="SSF56014">
    <property type="entry name" value="Nitrite and sulphite reductase 4Fe-4S domain-like"/>
    <property type="match status" value="1"/>
</dbReference>
<proteinExistence type="inferred from homology"/>
<keyword id="KW-0004">4Fe-4S</keyword>
<keyword id="KW-0408">Iron</keyword>
<keyword id="KW-0411">Iron-sulfur</keyword>
<keyword id="KW-0414">Isoprene biosynthesis</keyword>
<keyword id="KW-0479">Metal-binding</keyword>
<keyword id="KW-0560">Oxidoreductase</keyword>
<keyword id="KW-1185">Reference proteome</keyword>
<gene>
    <name evidence="1" type="primary">ispG</name>
    <name type="synonym">gcpE</name>
    <name type="ordered locus">YPO2879</name>
    <name type="ordered locus">y1353</name>
    <name type="ordered locus">YP_2745</name>
</gene>
<name>ISPG_YERPE</name>
<reference key="1">
    <citation type="journal article" date="2001" name="Nature">
        <title>Genome sequence of Yersinia pestis, the causative agent of plague.</title>
        <authorList>
            <person name="Parkhill J."/>
            <person name="Wren B.W."/>
            <person name="Thomson N.R."/>
            <person name="Titball R.W."/>
            <person name="Holden M.T.G."/>
            <person name="Prentice M.B."/>
            <person name="Sebaihia M."/>
            <person name="James K.D."/>
            <person name="Churcher C.M."/>
            <person name="Mungall K.L."/>
            <person name="Baker S."/>
            <person name="Basham D."/>
            <person name="Bentley S.D."/>
            <person name="Brooks K."/>
            <person name="Cerdeno-Tarraga A.-M."/>
            <person name="Chillingworth T."/>
            <person name="Cronin A."/>
            <person name="Davies R.M."/>
            <person name="Davis P."/>
            <person name="Dougan G."/>
            <person name="Feltwell T."/>
            <person name="Hamlin N."/>
            <person name="Holroyd S."/>
            <person name="Jagels K."/>
            <person name="Karlyshev A.V."/>
            <person name="Leather S."/>
            <person name="Moule S."/>
            <person name="Oyston P.C.F."/>
            <person name="Quail M.A."/>
            <person name="Rutherford K.M."/>
            <person name="Simmonds M."/>
            <person name="Skelton J."/>
            <person name="Stevens K."/>
            <person name="Whitehead S."/>
            <person name="Barrell B.G."/>
        </authorList>
    </citation>
    <scope>NUCLEOTIDE SEQUENCE [LARGE SCALE GENOMIC DNA]</scope>
    <source>
        <strain>CO-92 / Biovar Orientalis</strain>
    </source>
</reference>
<reference key="2">
    <citation type="journal article" date="2002" name="J. Bacteriol.">
        <title>Genome sequence of Yersinia pestis KIM.</title>
        <authorList>
            <person name="Deng W."/>
            <person name="Burland V."/>
            <person name="Plunkett G. III"/>
            <person name="Boutin A."/>
            <person name="Mayhew G.F."/>
            <person name="Liss P."/>
            <person name="Perna N.T."/>
            <person name="Rose D.J."/>
            <person name="Mau B."/>
            <person name="Zhou S."/>
            <person name="Schwartz D.C."/>
            <person name="Fetherston J.D."/>
            <person name="Lindler L.E."/>
            <person name="Brubaker R.R."/>
            <person name="Plano G.V."/>
            <person name="Straley S.C."/>
            <person name="McDonough K.A."/>
            <person name="Nilles M.L."/>
            <person name="Matson J.S."/>
            <person name="Blattner F.R."/>
            <person name="Perry R.D."/>
        </authorList>
    </citation>
    <scope>NUCLEOTIDE SEQUENCE [LARGE SCALE GENOMIC DNA]</scope>
    <source>
        <strain>KIM10+ / Biovar Mediaevalis</strain>
    </source>
</reference>
<reference key="3">
    <citation type="journal article" date="2004" name="DNA Res.">
        <title>Complete genome sequence of Yersinia pestis strain 91001, an isolate avirulent to humans.</title>
        <authorList>
            <person name="Song Y."/>
            <person name="Tong Z."/>
            <person name="Wang J."/>
            <person name="Wang L."/>
            <person name="Guo Z."/>
            <person name="Han Y."/>
            <person name="Zhang J."/>
            <person name="Pei D."/>
            <person name="Zhou D."/>
            <person name="Qin H."/>
            <person name="Pang X."/>
            <person name="Han Y."/>
            <person name="Zhai J."/>
            <person name="Li M."/>
            <person name="Cui B."/>
            <person name="Qi Z."/>
            <person name="Jin L."/>
            <person name="Dai R."/>
            <person name="Chen F."/>
            <person name="Li S."/>
            <person name="Ye C."/>
            <person name="Du Z."/>
            <person name="Lin W."/>
            <person name="Wang J."/>
            <person name="Yu J."/>
            <person name="Yang H."/>
            <person name="Wang J."/>
            <person name="Huang P."/>
            <person name="Yang R."/>
        </authorList>
    </citation>
    <scope>NUCLEOTIDE SEQUENCE [LARGE SCALE GENOMIC DNA]</scope>
    <source>
        <strain>91001 / Biovar Mediaevalis</strain>
    </source>
</reference>
<feature type="chain" id="PRO_0000190665" description="4-hydroxy-3-methylbut-2-en-1-yl diphosphate synthase (flavodoxin)">
    <location>
        <begin position="1"/>
        <end position="375"/>
    </location>
</feature>
<feature type="binding site" evidence="1">
    <location>
        <position position="270"/>
    </location>
    <ligand>
        <name>[4Fe-4S] cluster</name>
        <dbReference type="ChEBI" id="CHEBI:49883"/>
    </ligand>
</feature>
<feature type="binding site" evidence="1">
    <location>
        <position position="273"/>
    </location>
    <ligand>
        <name>[4Fe-4S] cluster</name>
        <dbReference type="ChEBI" id="CHEBI:49883"/>
    </ligand>
</feature>
<feature type="binding site" evidence="1">
    <location>
        <position position="305"/>
    </location>
    <ligand>
        <name>[4Fe-4S] cluster</name>
        <dbReference type="ChEBI" id="CHEBI:49883"/>
    </ligand>
</feature>
<feature type="binding site" evidence="1">
    <location>
        <position position="312"/>
    </location>
    <ligand>
        <name>[4Fe-4S] cluster</name>
        <dbReference type="ChEBI" id="CHEBI:49883"/>
    </ligand>
</feature>
<evidence type="ECO:0000255" key="1">
    <source>
        <dbReference type="HAMAP-Rule" id="MF_00159"/>
    </source>
</evidence>
<accession>P58672</accession>
<accession>Q0WD24</accession>
<sequence length="375" mass="40798">MHNGSPIIRRKSTRIYVGKVPIGDGAPIAVQSMTNTKTTDVDATVAQIKALERVGVDIVRVSIPTMDAAEAFKLIKQQSTVPLVADIHFDYRIALKVAEYGVDCLRINPGNIGNESRIREVVACARDYNIPIRIGINGGSLEKDIQEKYGEPTPEALLESAMRHVDILDRLNFDQFKVSVKASDVFLAVNSYRLLAKQINNPLHLGITEAGGARSGSVKSAIGLGLLLSEGIGDTLRISLAADPVEEVKVGFDILKSLRIRARGINFIACPTCSRQEFDVIGTVNALEQRLEDLITPMDVSIIGCVVNGPGEALVSTIGVTGARNHSGFYEDGVRQKERFDNKAMIDQLEAKIRAKASILDANNRIVINQLDDNK</sequence>
<protein>
    <recommendedName>
        <fullName evidence="1">4-hydroxy-3-methylbut-2-en-1-yl diphosphate synthase (flavodoxin)</fullName>
        <ecNumber evidence="1">1.17.7.3</ecNumber>
    </recommendedName>
    <alternativeName>
        <fullName evidence="1">1-hydroxy-2-methyl-2-(E)-butenyl 4-diphosphate synthase</fullName>
    </alternativeName>
</protein>
<organism>
    <name type="scientific">Yersinia pestis</name>
    <dbReference type="NCBI Taxonomy" id="632"/>
    <lineage>
        <taxon>Bacteria</taxon>
        <taxon>Pseudomonadati</taxon>
        <taxon>Pseudomonadota</taxon>
        <taxon>Gammaproteobacteria</taxon>
        <taxon>Enterobacterales</taxon>
        <taxon>Yersiniaceae</taxon>
        <taxon>Yersinia</taxon>
    </lineage>
</organism>